<dbReference type="EMBL" id="CP000941">
    <property type="protein sequence ID" value="ACA11112.1"/>
    <property type="molecule type" value="Genomic_DNA"/>
</dbReference>
<dbReference type="RefSeq" id="WP_004085558.1">
    <property type="nucleotide sequence ID" value="NC_010513.1"/>
</dbReference>
<dbReference type="SMR" id="B0U1E7"/>
<dbReference type="GeneID" id="93903758"/>
<dbReference type="KEGG" id="xfm:Xfasm12_0070"/>
<dbReference type="HOGENOM" id="CLU_113688_2_0_6"/>
<dbReference type="GO" id="GO:0005829">
    <property type="term" value="C:cytosol"/>
    <property type="evidence" value="ECO:0007669"/>
    <property type="project" value="TreeGrafter"/>
</dbReference>
<dbReference type="GO" id="GO:0003723">
    <property type="term" value="F:RNA binding"/>
    <property type="evidence" value="ECO:0007669"/>
    <property type="project" value="UniProtKB-UniRule"/>
</dbReference>
<dbReference type="GO" id="GO:0006355">
    <property type="term" value="P:regulation of DNA-templated transcription"/>
    <property type="evidence" value="ECO:0007669"/>
    <property type="project" value="InterPro"/>
</dbReference>
<dbReference type="GO" id="GO:0043487">
    <property type="term" value="P:regulation of RNA stability"/>
    <property type="evidence" value="ECO:0007669"/>
    <property type="project" value="TreeGrafter"/>
</dbReference>
<dbReference type="GO" id="GO:0045974">
    <property type="term" value="P:regulation of translation, ncRNA-mediated"/>
    <property type="evidence" value="ECO:0007669"/>
    <property type="project" value="TreeGrafter"/>
</dbReference>
<dbReference type="CDD" id="cd01716">
    <property type="entry name" value="Hfq"/>
    <property type="match status" value="1"/>
</dbReference>
<dbReference type="FunFam" id="2.30.30.100:FF:000001">
    <property type="entry name" value="RNA-binding protein Hfq"/>
    <property type="match status" value="1"/>
</dbReference>
<dbReference type="Gene3D" id="2.30.30.100">
    <property type="match status" value="1"/>
</dbReference>
<dbReference type="HAMAP" id="MF_00436">
    <property type="entry name" value="Hfq"/>
    <property type="match status" value="1"/>
</dbReference>
<dbReference type="InterPro" id="IPR005001">
    <property type="entry name" value="Hfq"/>
</dbReference>
<dbReference type="InterPro" id="IPR010920">
    <property type="entry name" value="LSM_dom_sf"/>
</dbReference>
<dbReference type="InterPro" id="IPR047575">
    <property type="entry name" value="Sm"/>
</dbReference>
<dbReference type="NCBIfam" id="TIGR02383">
    <property type="entry name" value="Hfq"/>
    <property type="match status" value="1"/>
</dbReference>
<dbReference type="NCBIfam" id="NF001602">
    <property type="entry name" value="PRK00395.1"/>
    <property type="match status" value="1"/>
</dbReference>
<dbReference type="PANTHER" id="PTHR34772">
    <property type="entry name" value="RNA-BINDING PROTEIN HFQ"/>
    <property type="match status" value="1"/>
</dbReference>
<dbReference type="PANTHER" id="PTHR34772:SF1">
    <property type="entry name" value="RNA-BINDING PROTEIN HFQ"/>
    <property type="match status" value="1"/>
</dbReference>
<dbReference type="Pfam" id="PF17209">
    <property type="entry name" value="Hfq"/>
    <property type="match status" value="1"/>
</dbReference>
<dbReference type="SUPFAM" id="SSF50182">
    <property type="entry name" value="Sm-like ribonucleoproteins"/>
    <property type="match status" value="1"/>
</dbReference>
<dbReference type="PROSITE" id="PS52002">
    <property type="entry name" value="SM"/>
    <property type="match status" value="1"/>
</dbReference>
<keyword id="KW-0694">RNA-binding</keyword>
<keyword id="KW-0346">Stress response</keyword>
<gene>
    <name evidence="1" type="primary">hfq</name>
    <name type="ordered locus">Xfasm12_0070</name>
</gene>
<sequence length="92" mass="10128">MAKGQSLQDPFLNALRRERVPVSVYLVNGIKLQGTIESFDQFVVLLRNTVSQMVYKHAISTVVPARNVRVGPGGGYVHSGSDTLQINDDEVE</sequence>
<accession>B0U1E7</accession>
<feature type="chain" id="PRO_1000190370" description="RNA-binding protein Hfq">
    <location>
        <begin position="1"/>
        <end position="92"/>
    </location>
</feature>
<feature type="domain" description="Sm" evidence="2">
    <location>
        <begin position="9"/>
        <end position="68"/>
    </location>
</feature>
<proteinExistence type="inferred from homology"/>
<name>HFQ_XYLFM</name>
<comment type="function">
    <text evidence="1">RNA chaperone that binds small regulatory RNA (sRNAs) and mRNAs to facilitate mRNA translational regulation in response to envelope stress, environmental stress and changes in metabolite concentrations. Also binds with high specificity to tRNAs.</text>
</comment>
<comment type="subunit">
    <text evidence="1">Homohexamer.</text>
</comment>
<comment type="similarity">
    <text evidence="1">Belongs to the Hfq family.</text>
</comment>
<evidence type="ECO:0000255" key="1">
    <source>
        <dbReference type="HAMAP-Rule" id="MF_00436"/>
    </source>
</evidence>
<evidence type="ECO:0000255" key="2">
    <source>
        <dbReference type="PROSITE-ProRule" id="PRU01346"/>
    </source>
</evidence>
<organism>
    <name type="scientific">Xylella fastidiosa (strain M12)</name>
    <dbReference type="NCBI Taxonomy" id="405440"/>
    <lineage>
        <taxon>Bacteria</taxon>
        <taxon>Pseudomonadati</taxon>
        <taxon>Pseudomonadota</taxon>
        <taxon>Gammaproteobacteria</taxon>
        <taxon>Lysobacterales</taxon>
        <taxon>Lysobacteraceae</taxon>
        <taxon>Xylella</taxon>
    </lineage>
</organism>
<protein>
    <recommendedName>
        <fullName evidence="1">RNA-binding protein Hfq</fullName>
    </recommendedName>
</protein>
<reference key="1">
    <citation type="journal article" date="2010" name="J. Bacteriol.">
        <title>Whole genome sequences of two Xylella fastidiosa strains (M12 and M23) causing almond leaf scorch disease in California.</title>
        <authorList>
            <person name="Chen J."/>
            <person name="Xie G."/>
            <person name="Han S."/>
            <person name="Chertkov O."/>
            <person name="Sims D."/>
            <person name="Civerolo E.L."/>
        </authorList>
    </citation>
    <scope>NUCLEOTIDE SEQUENCE [LARGE SCALE GENOMIC DNA]</scope>
    <source>
        <strain>M12</strain>
    </source>
</reference>